<evidence type="ECO:0000255" key="1">
    <source>
        <dbReference type="HAMAP-Rule" id="MF_00270"/>
    </source>
</evidence>
<evidence type="ECO:0000305" key="2"/>
<dbReference type="EMBL" id="FM200053">
    <property type="protein sequence ID" value="CAR62196.1"/>
    <property type="molecule type" value="Genomic_DNA"/>
</dbReference>
<dbReference type="RefSeq" id="WP_000135199.1">
    <property type="nucleotide sequence ID" value="NC_011147.1"/>
</dbReference>
<dbReference type="SMR" id="B5BKL1"/>
<dbReference type="GeneID" id="98186237"/>
<dbReference type="KEGG" id="sek:SSPA3910"/>
<dbReference type="HOGENOM" id="CLU_148710_2_3_6"/>
<dbReference type="Proteomes" id="UP000001869">
    <property type="component" value="Chromosome"/>
</dbReference>
<dbReference type="GO" id="GO:0022627">
    <property type="term" value="C:cytosolic small ribosomal subunit"/>
    <property type="evidence" value="ECO:0007669"/>
    <property type="project" value="TreeGrafter"/>
</dbReference>
<dbReference type="GO" id="GO:0070181">
    <property type="term" value="F:small ribosomal subunit rRNA binding"/>
    <property type="evidence" value="ECO:0007669"/>
    <property type="project" value="TreeGrafter"/>
</dbReference>
<dbReference type="GO" id="GO:0003735">
    <property type="term" value="F:structural constituent of ribosome"/>
    <property type="evidence" value="ECO:0007669"/>
    <property type="project" value="InterPro"/>
</dbReference>
<dbReference type="GO" id="GO:0006412">
    <property type="term" value="P:translation"/>
    <property type="evidence" value="ECO:0007669"/>
    <property type="project" value="UniProtKB-UniRule"/>
</dbReference>
<dbReference type="FunFam" id="4.10.640.10:FF:000001">
    <property type="entry name" value="30S ribosomal protein S18"/>
    <property type="match status" value="1"/>
</dbReference>
<dbReference type="Gene3D" id="4.10.640.10">
    <property type="entry name" value="Ribosomal protein S18"/>
    <property type="match status" value="1"/>
</dbReference>
<dbReference type="HAMAP" id="MF_00270">
    <property type="entry name" value="Ribosomal_bS18"/>
    <property type="match status" value="1"/>
</dbReference>
<dbReference type="InterPro" id="IPR001648">
    <property type="entry name" value="Ribosomal_bS18"/>
</dbReference>
<dbReference type="InterPro" id="IPR018275">
    <property type="entry name" value="Ribosomal_bS18_CS"/>
</dbReference>
<dbReference type="InterPro" id="IPR036870">
    <property type="entry name" value="Ribosomal_bS18_sf"/>
</dbReference>
<dbReference type="NCBIfam" id="TIGR00165">
    <property type="entry name" value="S18"/>
    <property type="match status" value="1"/>
</dbReference>
<dbReference type="PANTHER" id="PTHR13479">
    <property type="entry name" value="30S RIBOSOMAL PROTEIN S18"/>
    <property type="match status" value="1"/>
</dbReference>
<dbReference type="PANTHER" id="PTHR13479:SF40">
    <property type="entry name" value="SMALL RIBOSOMAL SUBUNIT PROTEIN BS18M"/>
    <property type="match status" value="1"/>
</dbReference>
<dbReference type="Pfam" id="PF01084">
    <property type="entry name" value="Ribosomal_S18"/>
    <property type="match status" value="1"/>
</dbReference>
<dbReference type="PRINTS" id="PR00974">
    <property type="entry name" value="RIBOSOMALS18"/>
</dbReference>
<dbReference type="SUPFAM" id="SSF46911">
    <property type="entry name" value="Ribosomal protein S18"/>
    <property type="match status" value="1"/>
</dbReference>
<dbReference type="PROSITE" id="PS00057">
    <property type="entry name" value="RIBOSOMAL_S18"/>
    <property type="match status" value="1"/>
</dbReference>
<comment type="function">
    <text evidence="1">Binds as a heterodimer with protein bS6 to the central domain of the 16S rRNA, where it helps stabilize the platform of the 30S subunit.</text>
</comment>
<comment type="subunit">
    <text evidence="1">Part of the 30S ribosomal subunit. Forms a tight heterodimer with protein bS6.</text>
</comment>
<comment type="similarity">
    <text evidence="1">Belongs to the bacterial ribosomal protein bS18 family.</text>
</comment>
<feature type="chain" id="PRO_1000114449" description="Small ribosomal subunit protein bS18">
    <location>
        <begin position="1"/>
        <end position="75"/>
    </location>
</feature>
<protein>
    <recommendedName>
        <fullName evidence="1">Small ribosomal subunit protein bS18</fullName>
    </recommendedName>
    <alternativeName>
        <fullName evidence="2">30S ribosomal protein S18</fullName>
    </alternativeName>
</protein>
<accession>B5BKL1</accession>
<keyword id="KW-0687">Ribonucleoprotein</keyword>
<keyword id="KW-0689">Ribosomal protein</keyword>
<keyword id="KW-0694">RNA-binding</keyword>
<keyword id="KW-0699">rRNA-binding</keyword>
<proteinExistence type="inferred from homology"/>
<reference key="1">
    <citation type="journal article" date="2009" name="BMC Genomics">
        <title>Pseudogene accumulation in the evolutionary histories of Salmonella enterica serovars Paratyphi A and Typhi.</title>
        <authorList>
            <person name="Holt K.E."/>
            <person name="Thomson N.R."/>
            <person name="Wain J."/>
            <person name="Langridge G.C."/>
            <person name="Hasan R."/>
            <person name="Bhutta Z.A."/>
            <person name="Quail M.A."/>
            <person name="Norbertczak H."/>
            <person name="Walker D."/>
            <person name="Simmonds M."/>
            <person name="White B."/>
            <person name="Bason N."/>
            <person name="Mungall K."/>
            <person name="Dougan G."/>
            <person name="Parkhill J."/>
        </authorList>
    </citation>
    <scope>NUCLEOTIDE SEQUENCE [LARGE SCALE GENOMIC DNA]</scope>
    <source>
        <strain>AKU_12601</strain>
    </source>
</reference>
<name>RS18_SALPK</name>
<organism>
    <name type="scientific">Salmonella paratyphi A (strain AKU_12601)</name>
    <dbReference type="NCBI Taxonomy" id="554290"/>
    <lineage>
        <taxon>Bacteria</taxon>
        <taxon>Pseudomonadati</taxon>
        <taxon>Pseudomonadota</taxon>
        <taxon>Gammaproteobacteria</taxon>
        <taxon>Enterobacterales</taxon>
        <taxon>Enterobacteriaceae</taxon>
        <taxon>Salmonella</taxon>
    </lineage>
</organism>
<gene>
    <name evidence="1" type="primary">rpsR</name>
    <name type="ordered locus">SSPA3910</name>
</gene>
<sequence>MARYFRRRKFCRFTAEGVQEIDYKDIATLKNYITESGKIVPSRITGTRAKYQRQLARAIKRARYLSLLPYTDRHQ</sequence>